<name>GYRB_ORYSJ</name>
<comment type="function">
    <text evidence="2">A type II topoisomerase that negatively supercoils closed circular double-stranded DNA in an ATP-dependent manner.</text>
</comment>
<comment type="catalytic activity">
    <reaction evidence="3">
        <text>ATP-dependent breakage, passage and rejoining of double-stranded DNA.</text>
        <dbReference type="EC" id="5.6.2.2"/>
    </reaction>
</comment>
<comment type="cofactor">
    <cofactor evidence="3">
        <name>Mg(2+)</name>
        <dbReference type="ChEBI" id="CHEBI:18420"/>
    </cofactor>
    <cofactor evidence="3">
        <name>Mn(2+)</name>
        <dbReference type="ChEBI" id="CHEBI:29035"/>
    </cofactor>
    <cofactor evidence="3">
        <name>Ca(2+)</name>
        <dbReference type="ChEBI" id="CHEBI:29108"/>
    </cofactor>
    <text evidence="3">Binds two Mg(2+) per subunit. The magnesium ions form salt bridges with both the protein and the DNA. Can also accept other divalent metal cations, such as Mn(2+) or Ca(2+).</text>
</comment>
<comment type="subunit">
    <text evidence="1">Made up of two chains. The A chain is responsible for DNA breakage and rejoining; the B chain catalyzes ATP hydrolysis.</text>
</comment>
<comment type="subcellular location">
    <subcellularLocation>
        <location evidence="4">Plastid</location>
        <location evidence="4">Chloroplast</location>
    </subcellularLocation>
    <subcellularLocation>
        <location evidence="4">Mitochondrion</location>
    </subcellularLocation>
</comment>
<comment type="similarity">
    <text evidence="4">Belongs to the type II topoisomerase GyrB family.</text>
</comment>
<dbReference type="EC" id="5.6.2.2" evidence="3"/>
<dbReference type="EMBL" id="AP000969">
    <property type="protein sequence ID" value="BAD81142.1"/>
    <property type="molecule type" value="Genomic_DNA"/>
</dbReference>
<dbReference type="EMBL" id="AP001073">
    <property type="protein sequence ID" value="BAD81163.1"/>
    <property type="molecule type" value="Genomic_DNA"/>
</dbReference>
<dbReference type="EMBL" id="AP008207">
    <property type="protein sequence ID" value="BAF04605.1"/>
    <property type="molecule type" value="Genomic_DNA"/>
</dbReference>
<dbReference type="EMBL" id="AP014957">
    <property type="protein sequence ID" value="BAS71481.1"/>
    <property type="molecule type" value="Genomic_DNA"/>
</dbReference>
<dbReference type="EMBL" id="AK102391">
    <property type="status" value="NOT_ANNOTATED_CDS"/>
    <property type="molecule type" value="mRNA"/>
</dbReference>
<dbReference type="RefSeq" id="XP_015622284.1">
    <property type="nucleotide sequence ID" value="XM_015766798.1"/>
</dbReference>
<dbReference type="SMR" id="Q5NBJ3"/>
<dbReference type="FunCoup" id="Q5NBJ3">
    <property type="interactions" value="190"/>
</dbReference>
<dbReference type="STRING" id="39947.Q5NBJ3"/>
<dbReference type="PaxDb" id="39947-Q5NBJ3"/>
<dbReference type="EnsemblPlants" id="Os01t0268300-01">
    <property type="protein sequence ID" value="Os01t0268300-01"/>
    <property type="gene ID" value="Os01g0268300"/>
</dbReference>
<dbReference type="Gramene" id="Os01t0268300-01">
    <property type="protein sequence ID" value="Os01t0268300-01"/>
    <property type="gene ID" value="Os01g0268300"/>
</dbReference>
<dbReference type="KEGG" id="dosa:Os01g0268300"/>
<dbReference type="eggNOG" id="KOG0355">
    <property type="taxonomic scope" value="Eukaryota"/>
</dbReference>
<dbReference type="HOGENOM" id="CLU_006146_4_1_1"/>
<dbReference type="InParanoid" id="Q5NBJ3"/>
<dbReference type="OMA" id="QLWSTTM"/>
<dbReference type="OrthoDB" id="276498at2759"/>
<dbReference type="Proteomes" id="UP000000763">
    <property type="component" value="Chromosome 1"/>
</dbReference>
<dbReference type="Proteomes" id="UP000059680">
    <property type="component" value="Chromosome 1"/>
</dbReference>
<dbReference type="ExpressionAtlas" id="Q5NBJ3">
    <property type="expression patterns" value="baseline and differential"/>
</dbReference>
<dbReference type="GO" id="GO:0009507">
    <property type="term" value="C:chloroplast"/>
    <property type="evidence" value="ECO:0007669"/>
    <property type="project" value="UniProtKB-SubCell"/>
</dbReference>
<dbReference type="GO" id="GO:0005694">
    <property type="term" value="C:chromosome"/>
    <property type="evidence" value="ECO:0007669"/>
    <property type="project" value="InterPro"/>
</dbReference>
<dbReference type="GO" id="GO:0005739">
    <property type="term" value="C:mitochondrion"/>
    <property type="evidence" value="ECO:0007669"/>
    <property type="project" value="UniProtKB-SubCell"/>
</dbReference>
<dbReference type="GO" id="GO:0005524">
    <property type="term" value="F:ATP binding"/>
    <property type="evidence" value="ECO:0007669"/>
    <property type="project" value="UniProtKB-KW"/>
</dbReference>
<dbReference type="GO" id="GO:0003677">
    <property type="term" value="F:DNA binding"/>
    <property type="evidence" value="ECO:0007669"/>
    <property type="project" value="UniProtKB-KW"/>
</dbReference>
<dbReference type="GO" id="GO:0003918">
    <property type="term" value="F:DNA topoisomerase type II (double strand cut, ATP-hydrolyzing) activity"/>
    <property type="evidence" value="ECO:0007669"/>
    <property type="project" value="UniProtKB-EC"/>
</dbReference>
<dbReference type="GO" id="GO:0046872">
    <property type="term" value="F:metal ion binding"/>
    <property type="evidence" value="ECO:0007669"/>
    <property type="project" value="UniProtKB-KW"/>
</dbReference>
<dbReference type="GO" id="GO:0006265">
    <property type="term" value="P:DNA topological change"/>
    <property type="evidence" value="ECO:0007669"/>
    <property type="project" value="InterPro"/>
</dbReference>
<dbReference type="CDD" id="cd16928">
    <property type="entry name" value="HATPase_GyrB-like"/>
    <property type="match status" value="1"/>
</dbReference>
<dbReference type="CDD" id="cd00822">
    <property type="entry name" value="TopoII_Trans_DNA_gyrase"/>
    <property type="match status" value="1"/>
</dbReference>
<dbReference type="CDD" id="cd03366">
    <property type="entry name" value="TOPRIM_TopoIIA_GyrB"/>
    <property type="match status" value="1"/>
</dbReference>
<dbReference type="FunFam" id="3.30.230.10:FF:000005">
    <property type="entry name" value="DNA gyrase subunit B"/>
    <property type="match status" value="1"/>
</dbReference>
<dbReference type="FunFam" id="3.30.565.10:FF:000002">
    <property type="entry name" value="DNA gyrase subunit B"/>
    <property type="match status" value="1"/>
</dbReference>
<dbReference type="FunFam" id="3.40.50.670:FF:000002">
    <property type="entry name" value="DNA gyrase subunit B"/>
    <property type="match status" value="1"/>
</dbReference>
<dbReference type="Gene3D" id="3.30.230.10">
    <property type="match status" value="1"/>
</dbReference>
<dbReference type="Gene3D" id="3.40.50.670">
    <property type="match status" value="1"/>
</dbReference>
<dbReference type="Gene3D" id="3.30.565.10">
    <property type="entry name" value="Histidine kinase-like ATPase, C-terminal domain"/>
    <property type="match status" value="1"/>
</dbReference>
<dbReference type="InterPro" id="IPR002288">
    <property type="entry name" value="DNA_gyrase_B_C"/>
</dbReference>
<dbReference type="InterPro" id="IPR011557">
    <property type="entry name" value="GyrB"/>
</dbReference>
<dbReference type="InterPro" id="IPR036890">
    <property type="entry name" value="HATPase_C_sf"/>
</dbReference>
<dbReference type="InterPro" id="IPR020568">
    <property type="entry name" value="Ribosomal_Su5_D2-typ_SF"/>
</dbReference>
<dbReference type="InterPro" id="IPR014721">
    <property type="entry name" value="Ribsml_uS5_D2-typ_fold_subgr"/>
</dbReference>
<dbReference type="InterPro" id="IPR001241">
    <property type="entry name" value="Topo_IIA"/>
</dbReference>
<dbReference type="InterPro" id="IPR013760">
    <property type="entry name" value="Topo_IIA-like_dom_sf"/>
</dbReference>
<dbReference type="InterPro" id="IPR000565">
    <property type="entry name" value="Topo_IIA_B"/>
</dbReference>
<dbReference type="InterPro" id="IPR013759">
    <property type="entry name" value="Topo_IIA_B_C"/>
</dbReference>
<dbReference type="InterPro" id="IPR013506">
    <property type="entry name" value="Topo_IIA_bsu_dom2"/>
</dbReference>
<dbReference type="InterPro" id="IPR018522">
    <property type="entry name" value="TopoIIA_CS"/>
</dbReference>
<dbReference type="InterPro" id="IPR006171">
    <property type="entry name" value="TOPRIM_dom"/>
</dbReference>
<dbReference type="InterPro" id="IPR034160">
    <property type="entry name" value="TOPRIM_GyrB"/>
</dbReference>
<dbReference type="NCBIfam" id="TIGR01059">
    <property type="entry name" value="gyrB"/>
    <property type="match status" value="1"/>
</dbReference>
<dbReference type="NCBIfam" id="NF004189">
    <property type="entry name" value="PRK05644.1"/>
    <property type="match status" value="1"/>
</dbReference>
<dbReference type="NCBIfam" id="NF011501">
    <property type="entry name" value="PRK14939.1"/>
    <property type="match status" value="1"/>
</dbReference>
<dbReference type="PANTHER" id="PTHR45866:SF1">
    <property type="entry name" value="DNA GYRASE SUBUNIT B, MITOCHONDRIAL"/>
    <property type="match status" value="1"/>
</dbReference>
<dbReference type="PANTHER" id="PTHR45866">
    <property type="entry name" value="DNA GYRASE/TOPOISOMERASE SUBUNIT B"/>
    <property type="match status" value="1"/>
</dbReference>
<dbReference type="Pfam" id="PF00204">
    <property type="entry name" value="DNA_gyraseB"/>
    <property type="match status" value="1"/>
</dbReference>
<dbReference type="Pfam" id="PF00986">
    <property type="entry name" value="DNA_gyraseB_C"/>
    <property type="match status" value="1"/>
</dbReference>
<dbReference type="Pfam" id="PF02518">
    <property type="entry name" value="HATPase_c"/>
    <property type="match status" value="1"/>
</dbReference>
<dbReference type="Pfam" id="PF01751">
    <property type="entry name" value="Toprim"/>
    <property type="match status" value="1"/>
</dbReference>
<dbReference type="PRINTS" id="PR01159">
    <property type="entry name" value="DNAGYRASEB"/>
</dbReference>
<dbReference type="PRINTS" id="PR00418">
    <property type="entry name" value="TPI2FAMILY"/>
</dbReference>
<dbReference type="SMART" id="SM00387">
    <property type="entry name" value="HATPase_c"/>
    <property type="match status" value="1"/>
</dbReference>
<dbReference type="SMART" id="SM00433">
    <property type="entry name" value="TOP2c"/>
    <property type="match status" value="1"/>
</dbReference>
<dbReference type="SUPFAM" id="SSF55874">
    <property type="entry name" value="ATPase domain of HSP90 chaperone/DNA topoisomerase II/histidine kinase"/>
    <property type="match status" value="1"/>
</dbReference>
<dbReference type="SUPFAM" id="SSF54211">
    <property type="entry name" value="Ribosomal protein S5 domain 2-like"/>
    <property type="match status" value="1"/>
</dbReference>
<dbReference type="SUPFAM" id="SSF56719">
    <property type="entry name" value="Type II DNA topoisomerase"/>
    <property type="match status" value="1"/>
</dbReference>
<dbReference type="PROSITE" id="PS00177">
    <property type="entry name" value="TOPOISOMERASE_II"/>
    <property type="match status" value="1"/>
</dbReference>
<dbReference type="PROSITE" id="PS50880">
    <property type="entry name" value="TOPRIM"/>
    <property type="match status" value="1"/>
</dbReference>
<protein>
    <recommendedName>
        <fullName>DNA gyrase subunit B, chloroplastic/mitochondrial</fullName>
        <ecNumber evidence="3">5.6.2.2</ecNumber>
    </recommendedName>
</protein>
<evidence type="ECO:0000250" key="1">
    <source>
        <dbReference type="UniProtKB" id="P0AES6"/>
    </source>
</evidence>
<evidence type="ECO:0000250" key="2">
    <source>
        <dbReference type="UniProtKB" id="Q94BZ7"/>
    </source>
</evidence>
<evidence type="ECO:0000255" key="3">
    <source>
        <dbReference type="PROSITE-ProRule" id="PRU00995"/>
    </source>
</evidence>
<evidence type="ECO:0000305" key="4"/>
<keyword id="KW-0067">ATP-binding</keyword>
<keyword id="KW-0150">Chloroplast</keyword>
<keyword id="KW-0238">DNA-binding</keyword>
<keyword id="KW-0413">Isomerase</keyword>
<keyword id="KW-0460">Magnesium</keyword>
<keyword id="KW-0479">Metal-binding</keyword>
<keyword id="KW-0496">Mitochondrion</keyword>
<keyword id="KW-0547">Nucleotide-binding</keyword>
<keyword id="KW-0934">Plastid</keyword>
<keyword id="KW-1185">Reference proteome</keyword>
<keyword id="KW-0799">Topoisomerase</keyword>
<keyword id="KW-0809">Transit peptide</keyword>
<feature type="transit peptide" description="Chloroplast and mitochondrion">
    <location>
        <begin position="1"/>
        <end status="unknown"/>
    </location>
</feature>
<feature type="chain" id="PRO_0000247951" description="DNA gyrase subunit B, chloroplastic/mitochondrial">
    <location>
        <begin status="unknown"/>
        <end position="729"/>
    </location>
</feature>
<feature type="domain" description="Toprim" evidence="3">
    <location>
        <begin position="510"/>
        <end position="617"/>
    </location>
</feature>
<feature type="binding site" evidence="3">
    <location>
        <position position="516"/>
    </location>
    <ligand>
        <name>Mg(2+)</name>
        <dbReference type="ChEBI" id="CHEBI:18420"/>
        <label>1</label>
        <note>catalytic</note>
    </ligand>
</feature>
<feature type="binding site" evidence="3">
    <location>
        <position position="590"/>
    </location>
    <ligand>
        <name>Mg(2+)</name>
        <dbReference type="ChEBI" id="CHEBI:18420"/>
        <label>1</label>
        <note>catalytic</note>
    </ligand>
</feature>
<feature type="binding site" evidence="3">
    <location>
        <position position="590"/>
    </location>
    <ligand>
        <name>Mg(2+)</name>
        <dbReference type="ChEBI" id="CHEBI:18420"/>
        <label>2</label>
    </ligand>
</feature>
<feature type="binding site" evidence="3">
    <location>
        <position position="592"/>
    </location>
    <ligand>
        <name>Mg(2+)</name>
        <dbReference type="ChEBI" id="CHEBI:18420"/>
        <label>2</label>
    </ligand>
</feature>
<feature type="site" description="Interaction with DNA" evidence="3">
    <location>
        <position position="541"/>
    </location>
</feature>
<feature type="site" description="Interaction with DNA" evidence="3">
    <location>
        <position position="544"/>
    </location>
</feature>
<feature type="sequence conflict" description="In Ref. 5; AK102391." evidence="4" ref="5">
    <original>Q</original>
    <variation>R</variation>
    <location>
        <position position="81"/>
    </location>
</feature>
<feature type="sequence conflict" description="In Ref. 5; AK102391." evidence="4" ref="5">
    <original>K</original>
    <variation>R</variation>
    <location>
        <position position="378"/>
    </location>
</feature>
<proteinExistence type="evidence at transcript level"/>
<accession>Q5NBJ3</accession>
<accession>Q0JNS3</accession>
<reference key="1">
    <citation type="journal article" date="2002" name="Nature">
        <title>The genome sequence and structure of rice chromosome 1.</title>
        <authorList>
            <person name="Sasaki T."/>
            <person name="Matsumoto T."/>
            <person name="Yamamoto K."/>
            <person name="Sakata K."/>
            <person name="Baba T."/>
            <person name="Katayose Y."/>
            <person name="Wu J."/>
            <person name="Niimura Y."/>
            <person name="Cheng Z."/>
            <person name="Nagamura Y."/>
            <person name="Antonio B.A."/>
            <person name="Kanamori H."/>
            <person name="Hosokawa S."/>
            <person name="Masukawa M."/>
            <person name="Arikawa K."/>
            <person name="Chiden Y."/>
            <person name="Hayashi M."/>
            <person name="Okamoto M."/>
            <person name="Ando T."/>
            <person name="Aoki H."/>
            <person name="Arita K."/>
            <person name="Hamada M."/>
            <person name="Harada C."/>
            <person name="Hijishita S."/>
            <person name="Honda M."/>
            <person name="Ichikawa Y."/>
            <person name="Idonuma A."/>
            <person name="Iijima M."/>
            <person name="Ikeda M."/>
            <person name="Ikeno M."/>
            <person name="Ito S."/>
            <person name="Ito T."/>
            <person name="Ito Y."/>
            <person name="Ito Y."/>
            <person name="Iwabuchi A."/>
            <person name="Kamiya K."/>
            <person name="Karasawa W."/>
            <person name="Katagiri S."/>
            <person name="Kikuta A."/>
            <person name="Kobayashi N."/>
            <person name="Kono I."/>
            <person name="Machita K."/>
            <person name="Maehara T."/>
            <person name="Mizuno H."/>
            <person name="Mizubayashi T."/>
            <person name="Mukai Y."/>
            <person name="Nagasaki H."/>
            <person name="Nakashima M."/>
            <person name="Nakama Y."/>
            <person name="Nakamichi Y."/>
            <person name="Nakamura M."/>
            <person name="Namiki N."/>
            <person name="Negishi M."/>
            <person name="Ohta I."/>
            <person name="Ono N."/>
            <person name="Saji S."/>
            <person name="Sakai K."/>
            <person name="Shibata M."/>
            <person name="Shimokawa T."/>
            <person name="Shomura A."/>
            <person name="Song J."/>
            <person name="Takazaki Y."/>
            <person name="Terasawa K."/>
            <person name="Tsuji K."/>
            <person name="Waki K."/>
            <person name="Yamagata H."/>
            <person name="Yamane H."/>
            <person name="Yoshiki S."/>
            <person name="Yoshihara R."/>
            <person name="Yukawa K."/>
            <person name="Zhong H."/>
            <person name="Iwama H."/>
            <person name="Endo T."/>
            <person name="Ito H."/>
            <person name="Hahn J.H."/>
            <person name="Kim H.-I."/>
            <person name="Eun M.-Y."/>
            <person name="Yano M."/>
            <person name="Jiang J."/>
            <person name="Gojobori T."/>
        </authorList>
    </citation>
    <scope>NUCLEOTIDE SEQUENCE [LARGE SCALE GENOMIC DNA]</scope>
    <source>
        <strain>cv. Nipponbare</strain>
    </source>
</reference>
<reference key="2">
    <citation type="journal article" date="2005" name="Nature">
        <title>The map-based sequence of the rice genome.</title>
        <authorList>
            <consortium name="International rice genome sequencing project (IRGSP)"/>
        </authorList>
    </citation>
    <scope>NUCLEOTIDE SEQUENCE [LARGE SCALE GENOMIC DNA]</scope>
    <source>
        <strain>cv. Nipponbare</strain>
    </source>
</reference>
<reference key="3">
    <citation type="journal article" date="2008" name="Nucleic Acids Res.">
        <title>The rice annotation project database (RAP-DB): 2008 update.</title>
        <authorList>
            <consortium name="The rice annotation project (RAP)"/>
        </authorList>
    </citation>
    <scope>GENOME REANNOTATION</scope>
    <source>
        <strain>cv. Nipponbare</strain>
    </source>
</reference>
<reference key="4">
    <citation type="journal article" date="2013" name="Rice">
        <title>Improvement of the Oryza sativa Nipponbare reference genome using next generation sequence and optical map data.</title>
        <authorList>
            <person name="Kawahara Y."/>
            <person name="de la Bastide M."/>
            <person name="Hamilton J.P."/>
            <person name="Kanamori H."/>
            <person name="McCombie W.R."/>
            <person name="Ouyang S."/>
            <person name="Schwartz D.C."/>
            <person name="Tanaka T."/>
            <person name="Wu J."/>
            <person name="Zhou S."/>
            <person name="Childs K.L."/>
            <person name="Davidson R.M."/>
            <person name="Lin H."/>
            <person name="Quesada-Ocampo L."/>
            <person name="Vaillancourt B."/>
            <person name="Sakai H."/>
            <person name="Lee S.S."/>
            <person name="Kim J."/>
            <person name="Numa H."/>
            <person name="Itoh T."/>
            <person name="Buell C.R."/>
            <person name="Matsumoto T."/>
        </authorList>
    </citation>
    <scope>GENOME REANNOTATION</scope>
    <source>
        <strain>cv. Nipponbare</strain>
    </source>
</reference>
<reference key="5">
    <citation type="journal article" date="2003" name="Science">
        <title>Collection, mapping, and annotation of over 28,000 cDNA clones from japonica rice.</title>
        <authorList>
            <consortium name="The rice full-length cDNA consortium"/>
        </authorList>
    </citation>
    <scope>NUCLEOTIDE SEQUENCE [LARGE SCALE MRNA]</scope>
    <source>
        <strain>cv. Nipponbare</strain>
    </source>
</reference>
<sequence>MGPLLRSSPPPRHLRLLLRRLLSTAAGRPSRLLPLPASSSARLLVRPRVAVAAAAAGAPLRRNGVAVRAFMASTAASEAMQEKRVAGEYTAANVQVLEALDGVRTRPGMYIGSTGSRGLHHLVYEILDNAVDEAQAGYATKVDVILHGDNSVSVTDNGRGIPTDIHPQTKKSCVETVLTLMHAGGKFGGSKSGYTVSGGLHGVGLSVVNALSEALEVTVWRDGKEYRQNYSRGKAITMLTSRTLSDESSSRQGTRIRFWPDKHIFTTTMDFDFNTIAGRIRELAFLNPELTIALTKEEDDLQVQHNEYCYAGGLVEYVKWLNTDKKSLHDPIAFRKEMDGITVDVSLQWCSDSYSDTVLGYANSIRTIDGGTHIDGLKTSLTRTINNFAKKSKTLKDKDISLSGEHVREGMTCIIAVKVPNPEFEGQTKTRLGNPEVRRIVEQSVQENLTEYLELHPDVLDSILSKSLNALKAALAAKRARELVRTKSVLKSSSLPGKLADCASSDPEESEIFIVEGDSAGGSAKQGRDRKFQAILPLRGKILNIERRDEAALYKNEEIQNLIVALGLGVKGEDFNKEALRYHKIVILTDADVDGAHIRTLLLTFFFRYQKALFDEGCIYVGVPPLYKVERGKQAHYCYDDADLKELVNTFPTNASYHIQRFKGLGEMMPAQLWETTMDPERRMLKQLKVEDAAEANVVFSSLMGTRVDVRKQLIQNAASMVNLEHLDI</sequence>
<organism>
    <name type="scientific">Oryza sativa subsp. japonica</name>
    <name type="common">Rice</name>
    <dbReference type="NCBI Taxonomy" id="39947"/>
    <lineage>
        <taxon>Eukaryota</taxon>
        <taxon>Viridiplantae</taxon>
        <taxon>Streptophyta</taxon>
        <taxon>Embryophyta</taxon>
        <taxon>Tracheophyta</taxon>
        <taxon>Spermatophyta</taxon>
        <taxon>Magnoliopsida</taxon>
        <taxon>Liliopsida</taxon>
        <taxon>Poales</taxon>
        <taxon>Poaceae</taxon>
        <taxon>BOP clade</taxon>
        <taxon>Oryzoideae</taxon>
        <taxon>Oryzeae</taxon>
        <taxon>Oryzinae</taxon>
        <taxon>Oryza</taxon>
        <taxon>Oryza sativa</taxon>
    </lineage>
</organism>
<gene>
    <name type="primary">GYRB</name>
    <name type="ordered locus">Os01g0268300</name>
    <name type="ordered locus">LOC_Os01g16290</name>
    <name type="ORF">P0011D01.27</name>
    <name type="ORF">P0667A10.1</name>
</gene>